<gene>
    <name evidence="1" type="primary">miaA</name>
    <name type="ordered locus">gbs1285</name>
</gene>
<organism>
    <name type="scientific">Streptococcus agalactiae serotype III (strain NEM316)</name>
    <dbReference type="NCBI Taxonomy" id="211110"/>
    <lineage>
        <taxon>Bacteria</taxon>
        <taxon>Bacillati</taxon>
        <taxon>Bacillota</taxon>
        <taxon>Bacilli</taxon>
        <taxon>Lactobacillales</taxon>
        <taxon>Streptococcaceae</taxon>
        <taxon>Streptococcus</taxon>
    </lineage>
</organism>
<keyword id="KW-0067">ATP-binding</keyword>
<keyword id="KW-0460">Magnesium</keyword>
<keyword id="KW-0547">Nucleotide-binding</keyword>
<keyword id="KW-0808">Transferase</keyword>
<keyword id="KW-0819">tRNA processing</keyword>
<evidence type="ECO:0000255" key="1">
    <source>
        <dbReference type="HAMAP-Rule" id="MF_00185"/>
    </source>
</evidence>
<feature type="chain" id="PRO_0000163980" description="tRNA dimethylallyltransferase">
    <location>
        <begin position="1"/>
        <end position="296"/>
    </location>
</feature>
<feature type="region of interest" description="Interaction with substrate tRNA" evidence="1">
    <location>
        <begin position="36"/>
        <end position="39"/>
    </location>
</feature>
<feature type="binding site" evidence="1">
    <location>
        <begin position="11"/>
        <end position="18"/>
    </location>
    <ligand>
        <name>ATP</name>
        <dbReference type="ChEBI" id="CHEBI:30616"/>
    </ligand>
</feature>
<feature type="binding site" evidence="1">
    <location>
        <begin position="13"/>
        <end position="18"/>
    </location>
    <ligand>
        <name>substrate</name>
    </ligand>
</feature>
<feature type="site" description="Interaction with substrate tRNA" evidence="1">
    <location>
        <position position="102"/>
    </location>
</feature>
<feature type="site" description="Interaction with substrate tRNA" evidence="1">
    <location>
        <position position="128"/>
    </location>
</feature>
<name>MIAA_STRA3</name>
<comment type="function">
    <text evidence="1">Catalyzes the transfer of a dimethylallyl group onto the adenine at position 37 in tRNAs that read codons beginning with uridine, leading to the formation of N6-(dimethylallyl)adenosine (i(6)A).</text>
</comment>
<comment type="catalytic activity">
    <reaction evidence="1">
        <text>adenosine(37) in tRNA + dimethylallyl diphosphate = N(6)-dimethylallyladenosine(37) in tRNA + diphosphate</text>
        <dbReference type="Rhea" id="RHEA:26482"/>
        <dbReference type="Rhea" id="RHEA-COMP:10162"/>
        <dbReference type="Rhea" id="RHEA-COMP:10375"/>
        <dbReference type="ChEBI" id="CHEBI:33019"/>
        <dbReference type="ChEBI" id="CHEBI:57623"/>
        <dbReference type="ChEBI" id="CHEBI:74411"/>
        <dbReference type="ChEBI" id="CHEBI:74415"/>
        <dbReference type="EC" id="2.5.1.75"/>
    </reaction>
</comment>
<comment type="cofactor">
    <cofactor evidence="1">
        <name>Mg(2+)</name>
        <dbReference type="ChEBI" id="CHEBI:18420"/>
    </cofactor>
</comment>
<comment type="subunit">
    <text evidence="1">Monomer.</text>
</comment>
<comment type="similarity">
    <text evidence="1">Belongs to the IPP transferase family.</text>
</comment>
<protein>
    <recommendedName>
        <fullName evidence="1">tRNA dimethylallyltransferase</fullName>
        <ecNumber evidence="1">2.5.1.75</ecNumber>
    </recommendedName>
    <alternativeName>
        <fullName evidence="1">Dimethylallyl diphosphate:tRNA dimethylallyltransferase</fullName>
        <shortName evidence="1">DMAPP:tRNA dimethylallyltransferase</shortName>
        <shortName evidence="1">DMATase</shortName>
    </alternativeName>
    <alternativeName>
        <fullName evidence="1">Isopentenyl-diphosphate:tRNA isopentenyltransferase</fullName>
        <shortName evidence="1">IPP transferase</shortName>
        <shortName evidence="1">IPPT</shortName>
        <shortName evidence="1">IPTase</shortName>
    </alternativeName>
</protein>
<accession>Q8E4V8</accession>
<dbReference type="EC" id="2.5.1.75" evidence="1"/>
<dbReference type="EMBL" id="AL766850">
    <property type="protein sequence ID" value="CAD46944.1"/>
    <property type="molecule type" value="Genomic_DNA"/>
</dbReference>
<dbReference type="RefSeq" id="WP_001226480.1">
    <property type="nucleotide sequence ID" value="NC_004368.1"/>
</dbReference>
<dbReference type="SMR" id="Q8E4V8"/>
<dbReference type="GeneID" id="66886136"/>
<dbReference type="KEGG" id="san:gbs1285"/>
<dbReference type="eggNOG" id="COG0324">
    <property type="taxonomic scope" value="Bacteria"/>
</dbReference>
<dbReference type="HOGENOM" id="CLU_032616_0_1_9"/>
<dbReference type="Proteomes" id="UP000000823">
    <property type="component" value="Chromosome"/>
</dbReference>
<dbReference type="GO" id="GO:0005524">
    <property type="term" value="F:ATP binding"/>
    <property type="evidence" value="ECO:0007669"/>
    <property type="project" value="UniProtKB-UniRule"/>
</dbReference>
<dbReference type="GO" id="GO:0052381">
    <property type="term" value="F:tRNA dimethylallyltransferase activity"/>
    <property type="evidence" value="ECO:0007669"/>
    <property type="project" value="UniProtKB-UniRule"/>
</dbReference>
<dbReference type="GO" id="GO:0006400">
    <property type="term" value="P:tRNA modification"/>
    <property type="evidence" value="ECO:0007669"/>
    <property type="project" value="TreeGrafter"/>
</dbReference>
<dbReference type="Gene3D" id="3.40.50.300">
    <property type="entry name" value="P-loop containing nucleotide triphosphate hydrolases"/>
    <property type="match status" value="1"/>
</dbReference>
<dbReference type="HAMAP" id="MF_00185">
    <property type="entry name" value="IPP_trans"/>
    <property type="match status" value="1"/>
</dbReference>
<dbReference type="InterPro" id="IPR039657">
    <property type="entry name" value="Dimethylallyltransferase"/>
</dbReference>
<dbReference type="InterPro" id="IPR018022">
    <property type="entry name" value="IPT"/>
</dbReference>
<dbReference type="InterPro" id="IPR027417">
    <property type="entry name" value="P-loop_NTPase"/>
</dbReference>
<dbReference type="NCBIfam" id="TIGR00174">
    <property type="entry name" value="miaA"/>
    <property type="match status" value="1"/>
</dbReference>
<dbReference type="PANTHER" id="PTHR11088">
    <property type="entry name" value="TRNA DIMETHYLALLYLTRANSFERASE"/>
    <property type="match status" value="1"/>
</dbReference>
<dbReference type="PANTHER" id="PTHR11088:SF60">
    <property type="entry name" value="TRNA DIMETHYLALLYLTRANSFERASE"/>
    <property type="match status" value="1"/>
</dbReference>
<dbReference type="Pfam" id="PF01715">
    <property type="entry name" value="IPPT"/>
    <property type="match status" value="1"/>
</dbReference>
<dbReference type="SUPFAM" id="SSF52540">
    <property type="entry name" value="P-loop containing nucleoside triphosphate hydrolases"/>
    <property type="match status" value="1"/>
</dbReference>
<reference key="1">
    <citation type="journal article" date="2002" name="Mol. Microbiol.">
        <title>Genome sequence of Streptococcus agalactiae, a pathogen causing invasive neonatal disease.</title>
        <authorList>
            <person name="Glaser P."/>
            <person name="Rusniok C."/>
            <person name="Buchrieser C."/>
            <person name="Chevalier F."/>
            <person name="Frangeul L."/>
            <person name="Msadek T."/>
            <person name="Zouine M."/>
            <person name="Couve E."/>
            <person name="Lalioui L."/>
            <person name="Poyart C."/>
            <person name="Trieu-Cuot P."/>
            <person name="Kunst F."/>
        </authorList>
    </citation>
    <scope>NUCLEOTIDE SEQUENCE [LARGE SCALE GENOMIC DNA]</scope>
    <source>
        <strain>NEM316</strain>
    </source>
</reference>
<proteinExistence type="inferred from homology"/>
<sequence length="296" mass="33978">MRKIKLIAVVGPTAVGKTALGIELAKTFNGEIISGDSQQVYQKLDIGTAKASKEEQEQAYHHLIDVREVNENYSVYDFVKEAKVAIDTIISKGKIPIIVGGTGLYLQSLFEGYHLGGEVNQETLKAYREKLESLSDEDLFEKLTEQSIVIPQVNRRRAIRALELAKFGNDLQNSESPYDVLLIGLNDDRQVLYDRINRRVDLMIDNGLLDEAKWLYDNYPSVQASRGIGYKELFPYFSKQIPLEEAVDKLKQNTRRFAKRQLTWFRNRMNVEFIMVGEENYQQKIKRKVSDFLSSK</sequence>